<organism>
    <name type="scientific">Legionella pneumophila (strain Lens)</name>
    <dbReference type="NCBI Taxonomy" id="297245"/>
    <lineage>
        <taxon>Bacteria</taxon>
        <taxon>Pseudomonadati</taxon>
        <taxon>Pseudomonadota</taxon>
        <taxon>Gammaproteobacteria</taxon>
        <taxon>Legionellales</taxon>
        <taxon>Legionellaceae</taxon>
        <taxon>Legionella</taxon>
    </lineage>
</organism>
<sequence>MSSPFVPIITADIDWRDDLPYSLQFDDIYYSAEGGINQSLYVFVEGNNLINRWQQLPTNESNVFTIAETGFGTGMNFLLTWKLWEKFAPQNARLHYISCDKHPLKKDDLIKCLQKWPELSVQTEKLIEHYPVLTPGYHHLAFSNNRITLTLMLGDVLECYEQLLFCGDINLEHQLRESYVNAWYLDGFSPSKNQSMWSDNLFTVIAMLSKESTTVATYSASSIVKTALTNAGFVINKRKGFGPKRHMICAHYEKAYSSSKKNRHTPWHINYPVTKEERTALIVGGGLAGCFIANSLAKRGWEVTILEEKEKVGCGGSANQQAVLFPKLSIYKSPFTQFMLYSFLYANDVYKELLKHYNLGELKGSLLLAHNEREKANQQSLIHWLELYPELGQLVDEKQSSELSGISLPCGGLFIPSSGWINSPELCDILIDNKRISLITGNRVQSINYNQKNWVVNDIDASVLILANGQQVNYFHETNHLPVKAIRGQMTTIQSTQESTKLKIPLCAEGHVLPALNNSHRVGASYDIGTSEPELNALDDQLNLDRLKRIAPDIIWSQNVLDHWAGIRAASPDYLPIVGPLPNALEFKEIYSELKSNSKRWIAEAAPCYPNLYVCAAFGSRGLTTIPLATEWLAGLINREISILPRKLIQAISPARFLRKKIIQGP</sequence>
<gene>
    <name evidence="1" type="primary">mnmC</name>
    <name type="ordered locus">lpl1494</name>
</gene>
<evidence type="ECO:0000255" key="1">
    <source>
        <dbReference type="HAMAP-Rule" id="MF_01102"/>
    </source>
</evidence>
<proteinExistence type="inferred from homology"/>
<feature type="chain" id="PRO_0000347991" description="tRNA 5-methylaminomethyl-2-thiouridine biosynthesis bifunctional protein MnmC">
    <location>
        <begin position="1"/>
        <end position="666"/>
    </location>
</feature>
<feature type="region of interest" description="tRNA (mnm(5)s(2)U34)-methyltransferase">
    <location>
        <begin position="1"/>
        <end position="253"/>
    </location>
</feature>
<feature type="region of interest" description="FAD-dependent cmnm(5)s(2)U34 oxidoreductase">
    <location>
        <begin position="283"/>
        <end position="666"/>
    </location>
</feature>
<protein>
    <recommendedName>
        <fullName evidence="1">tRNA 5-methylaminomethyl-2-thiouridine biosynthesis bifunctional protein MnmC</fullName>
        <shortName evidence="1">tRNA mnm(5)s(2)U biosynthesis bifunctional protein</shortName>
    </recommendedName>
    <domain>
        <recommendedName>
            <fullName evidence="1">tRNA (mnm(5)s(2)U34)-methyltransferase</fullName>
            <ecNumber evidence="1">2.1.1.61</ecNumber>
        </recommendedName>
    </domain>
    <domain>
        <recommendedName>
            <fullName evidence="1">FAD-dependent cmnm(5)s(2)U34 oxidoreductase</fullName>
            <ecNumber evidence="1">1.5.-.-</ecNumber>
        </recommendedName>
    </domain>
</protein>
<accession>Q5WWF9</accession>
<keyword id="KW-0963">Cytoplasm</keyword>
<keyword id="KW-0274">FAD</keyword>
<keyword id="KW-0285">Flavoprotein</keyword>
<keyword id="KW-0489">Methyltransferase</keyword>
<keyword id="KW-0511">Multifunctional enzyme</keyword>
<keyword id="KW-0560">Oxidoreductase</keyword>
<keyword id="KW-0949">S-adenosyl-L-methionine</keyword>
<keyword id="KW-0808">Transferase</keyword>
<keyword id="KW-0819">tRNA processing</keyword>
<comment type="function">
    <text evidence="1">Catalyzes the last two steps in the biosynthesis of 5-methylaminomethyl-2-thiouridine (mnm(5)s(2)U) at the wobble position (U34) in tRNA. Catalyzes the FAD-dependent demodification of cmnm(5)s(2)U34 to nm(5)s(2)U34, followed by the transfer of a methyl group from S-adenosyl-L-methionine to nm(5)s(2)U34, to form mnm(5)s(2)U34.</text>
</comment>
<comment type="catalytic activity">
    <reaction evidence="1">
        <text>5-aminomethyl-2-thiouridine(34) in tRNA + S-adenosyl-L-methionine = 5-methylaminomethyl-2-thiouridine(34) in tRNA + S-adenosyl-L-homocysteine + H(+)</text>
        <dbReference type="Rhea" id="RHEA:19569"/>
        <dbReference type="Rhea" id="RHEA-COMP:10195"/>
        <dbReference type="Rhea" id="RHEA-COMP:10197"/>
        <dbReference type="ChEBI" id="CHEBI:15378"/>
        <dbReference type="ChEBI" id="CHEBI:57856"/>
        <dbReference type="ChEBI" id="CHEBI:59789"/>
        <dbReference type="ChEBI" id="CHEBI:74454"/>
        <dbReference type="ChEBI" id="CHEBI:74455"/>
        <dbReference type="EC" id="2.1.1.61"/>
    </reaction>
</comment>
<comment type="cofactor">
    <cofactor evidence="1">
        <name>FAD</name>
        <dbReference type="ChEBI" id="CHEBI:57692"/>
    </cofactor>
</comment>
<comment type="subcellular location">
    <subcellularLocation>
        <location evidence="1">Cytoplasm</location>
    </subcellularLocation>
</comment>
<comment type="similarity">
    <text evidence="1">In the N-terminal section; belongs to the methyltransferase superfamily. tRNA (mnm(5)s(2)U34)-methyltransferase family.</text>
</comment>
<comment type="similarity">
    <text evidence="1">In the C-terminal section; belongs to the DAO family.</text>
</comment>
<reference key="1">
    <citation type="journal article" date="2004" name="Nat. Genet.">
        <title>Evidence in the Legionella pneumophila genome for exploitation of host cell functions and high genome plasticity.</title>
        <authorList>
            <person name="Cazalet C."/>
            <person name="Rusniok C."/>
            <person name="Brueggemann H."/>
            <person name="Zidane N."/>
            <person name="Magnier A."/>
            <person name="Ma L."/>
            <person name="Tichit M."/>
            <person name="Jarraud S."/>
            <person name="Bouchier C."/>
            <person name="Vandenesch F."/>
            <person name="Kunst F."/>
            <person name="Etienne J."/>
            <person name="Glaser P."/>
            <person name="Buchrieser C."/>
        </authorList>
    </citation>
    <scope>NUCLEOTIDE SEQUENCE [LARGE SCALE GENOMIC DNA]</scope>
    <source>
        <strain>Lens</strain>
    </source>
</reference>
<name>MNMC_LEGPL</name>
<dbReference type="EC" id="2.1.1.61" evidence="1"/>
<dbReference type="EC" id="1.5.-.-" evidence="1"/>
<dbReference type="EMBL" id="CR628337">
    <property type="protein sequence ID" value="CAH15734.1"/>
    <property type="molecule type" value="Genomic_DNA"/>
</dbReference>
<dbReference type="RefSeq" id="WP_011215541.1">
    <property type="nucleotide sequence ID" value="NC_006369.1"/>
</dbReference>
<dbReference type="SMR" id="Q5WWF9"/>
<dbReference type="KEGG" id="lpf:lpl1494"/>
<dbReference type="LegioList" id="lpl1494"/>
<dbReference type="HOGENOM" id="CLU_022427_1_0_6"/>
<dbReference type="Proteomes" id="UP000002517">
    <property type="component" value="Chromosome"/>
</dbReference>
<dbReference type="GO" id="GO:0005737">
    <property type="term" value="C:cytoplasm"/>
    <property type="evidence" value="ECO:0007669"/>
    <property type="project" value="UniProtKB-SubCell"/>
</dbReference>
<dbReference type="GO" id="GO:0050660">
    <property type="term" value="F:flavin adenine dinucleotide binding"/>
    <property type="evidence" value="ECO:0007669"/>
    <property type="project" value="UniProtKB-UniRule"/>
</dbReference>
<dbReference type="GO" id="GO:0016645">
    <property type="term" value="F:oxidoreductase activity, acting on the CH-NH group of donors"/>
    <property type="evidence" value="ECO:0007669"/>
    <property type="project" value="InterPro"/>
</dbReference>
<dbReference type="GO" id="GO:0004808">
    <property type="term" value="F:tRNA (5-methylaminomethyl-2-thiouridylate)(34)-methyltransferase activity"/>
    <property type="evidence" value="ECO:0007669"/>
    <property type="project" value="UniProtKB-EC"/>
</dbReference>
<dbReference type="GO" id="GO:0032259">
    <property type="term" value="P:methylation"/>
    <property type="evidence" value="ECO:0007669"/>
    <property type="project" value="UniProtKB-KW"/>
</dbReference>
<dbReference type="GO" id="GO:0002097">
    <property type="term" value="P:tRNA wobble base modification"/>
    <property type="evidence" value="ECO:0007669"/>
    <property type="project" value="UniProtKB-UniRule"/>
</dbReference>
<dbReference type="Gene3D" id="3.30.9.10">
    <property type="entry name" value="D-Amino Acid Oxidase, subunit A, domain 2"/>
    <property type="match status" value="1"/>
</dbReference>
<dbReference type="Gene3D" id="3.50.50.60">
    <property type="entry name" value="FAD/NAD(P)-binding domain"/>
    <property type="match status" value="1"/>
</dbReference>
<dbReference type="Gene3D" id="3.40.50.150">
    <property type="entry name" value="Vaccinia Virus protein VP39"/>
    <property type="match status" value="1"/>
</dbReference>
<dbReference type="HAMAP" id="MF_01102">
    <property type="entry name" value="MnmC"/>
    <property type="match status" value="1"/>
</dbReference>
<dbReference type="InterPro" id="IPR006076">
    <property type="entry name" value="FAD-dep_OxRdtase"/>
</dbReference>
<dbReference type="InterPro" id="IPR036188">
    <property type="entry name" value="FAD/NAD-bd_sf"/>
</dbReference>
<dbReference type="InterPro" id="IPR008471">
    <property type="entry name" value="MnmC-like_methylTransf"/>
</dbReference>
<dbReference type="InterPro" id="IPR029063">
    <property type="entry name" value="SAM-dependent_MTases_sf"/>
</dbReference>
<dbReference type="InterPro" id="IPR023032">
    <property type="entry name" value="tRNA_MAMT_biosynth_bifunc_MnmC"/>
</dbReference>
<dbReference type="InterPro" id="IPR047785">
    <property type="entry name" value="tRNA_MNMC2"/>
</dbReference>
<dbReference type="InterPro" id="IPR017610">
    <property type="entry name" value="tRNA_S-uridine_synth_MnmC_C"/>
</dbReference>
<dbReference type="NCBIfam" id="TIGR03197">
    <property type="entry name" value="MnmC_Cterm"/>
    <property type="match status" value="1"/>
</dbReference>
<dbReference type="NCBIfam" id="NF002481">
    <property type="entry name" value="PRK01747.1-2"/>
    <property type="match status" value="1"/>
</dbReference>
<dbReference type="NCBIfam" id="NF033855">
    <property type="entry name" value="tRNA_MNMC2"/>
    <property type="match status" value="1"/>
</dbReference>
<dbReference type="PANTHER" id="PTHR13847">
    <property type="entry name" value="SARCOSINE DEHYDROGENASE-RELATED"/>
    <property type="match status" value="1"/>
</dbReference>
<dbReference type="PANTHER" id="PTHR13847:SF283">
    <property type="entry name" value="TRNA 5-METHYLAMINOMETHYL-2-THIOURIDINE BIOSYNTHESIS BIFUNCTIONAL PROTEIN MNMC"/>
    <property type="match status" value="1"/>
</dbReference>
<dbReference type="Pfam" id="PF01266">
    <property type="entry name" value="DAO"/>
    <property type="match status" value="1"/>
</dbReference>
<dbReference type="Pfam" id="PF05430">
    <property type="entry name" value="Methyltransf_30"/>
    <property type="match status" value="1"/>
</dbReference>
<dbReference type="SUPFAM" id="SSF54373">
    <property type="entry name" value="FAD-linked reductases, C-terminal domain"/>
    <property type="match status" value="1"/>
</dbReference>
<dbReference type="SUPFAM" id="SSF51905">
    <property type="entry name" value="FAD/NAD(P)-binding domain"/>
    <property type="match status" value="1"/>
</dbReference>